<protein>
    <recommendedName>
        <fullName evidence="1">Thymidylate kinase</fullName>
        <ecNumber evidence="1">2.7.4.9</ecNumber>
    </recommendedName>
    <alternativeName>
        <fullName evidence="1">dTMP kinase</fullName>
    </alternativeName>
</protein>
<name>KTHY_BACMK</name>
<organism>
    <name type="scientific">Bacillus mycoides (strain KBAB4)</name>
    <name type="common">Bacillus weihenstephanensis</name>
    <dbReference type="NCBI Taxonomy" id="315730"/>
    <lineage>
        <taxon>Bacteria</taxon>
        <taxon>Bacillati</taxon>
        <taxon>Bacillota</taxon>
        <taxon>Bacilli</taxon>
        <taxon>Bacillales</taxon>
        <taxon>Bacillaceae</taxon>
        <taxon>Bacillus</taxon>
        <taxon>Bacillus cereus group</taxon>
    </lineage>
</organism>
<dbReference type="EC" id="2.7.4.9" evidence="1"/>
<dbReference type="EMBL" id="CP000903">
    <property type="protein sequence ID" value="ABY41294.1"/>
    <property type="molecule type" value="Genomic_DNA"/>
</dbReference>
<dbReference type="RefSeq" id="WP_002009634.1">
    <property type="nucleotide sequence ID" value="NC_010184.1"/>
</dbReference>
<dbReference type="SMR" id="A9VN43"/>
<dbReference type="KEGG" id="bwe:BcerKBAB4_0025"/>
<dbReference type="eggNOG" id="COG0125">
    <property type="taxonomic scope" value="Bacteria"/>
</dbReference>
<dbReference type="HOGENOM" id="CLU_049131_0_2_9"/>
<dbReference type="Proteomes" id="UP000002154">
    <property type="component" value="Chromosome"/>
</dbReference>
<dbReference type="GO" id="GO:0005829">
    <property type="term" value="C:cytosol"/>
    <property type="evidence" value="ECO:0007669"/>
    <property type="project" value="TreeGrafter"/>
</dbReference>
<dbReference type="GO" id="GO:0005524">
    <property type="term" value="F:ATP binding"/>
    <property type="evidence" value="ECO:0007669"/>
    <property type="project" value="UniProtKB-UniRule"/>
</dbReference>
<dbReference type="GO" id="GO:0004798">
    <property type="term" value="F:dTMP kinase activity"/>
    <property type="evidence" value="ECO:0007669"/>
    <property type="project" value="UniProtKB-UniRule"/>
</dbReference>
<dbReference type="GO" id="GO:0006233">
    <property type="term" value="P:dTDP biosynthetic process"/>
    <property type="evidence" value="ECO:0007669"/>
    <property type="project" value="InterPro"/>
</dbReference>
<dbReference type="GO" id="GO:0006235">
    <property type="term" value="P:dTTP biosynthetic process"/>
    <property type="evidence" value="ECO:0007669"/>
    <property type="project" value="UniProtKB-UniRule"/>
</dbReference>
<dbReference type="GO" id="GO:0006227">
    <property type="term" value="P:dUDP biosynthetic process"/>
    <property type="evidence" value="ECO:0007669"/>
    <property type="project" value="TreeGrafter"/>
</dbReference>
<dbReference type="CDD" id="cd01672">
    <property type="entry name" value="TMPK"/>
    <property type="match status" value="1"/>
</dbReference>
<dbReference type="FunFam" id="3.40.50.300:FF:000225">
    <property type="entry name" value="Thymidylate kinase"/>
    <property type="match status" value="1"/>
</dbReference>
<dbReference type="Gene3D" id="3.40.50.300">
    <property type="entry name" value="P-loop containing nucleotide triphosphate hydrolases"/>
    <property type="match status" value="1"/>
</dbReference>
<dbReference type="HAMAP" id="MF_00165">
    <property type="entry name" value="Thymidylate_kinase"/>
    <property type="match status" value="1"/>
</dbReference>
<dbReference type="InterPro" id="IPR027417">
    <property type="entry name" value="P-loop_NTPase"/>
</dbReference>
<dbReference type="InterPro" id="IPR039430">
    <property type="entry name" value="Thymidylate_kin-like_dom"/>
</dbReference>
<dbReference type="InterPro" id="IPR018095">
    <property type="entry name" value="Thymidylate_kin_CS"/>
</dbReference>
<dbReference type="InterPro" id="IPR018094">
    <property type="entry name" value="Thymidylate_kinase"/>
</dbReference>
<dbReference type="NCBIfam" id="TIGR00041">
    <property type="entry name" value="DTMP_kinase"/>
    <property type="match status" value="1"/>
</dbReference>
<dbReference type="PANTHER" id="PTHR10344">
    <property type="entry name" value="THYMIDYLATE KINASE"/>
    <property type="match status" value="1"/>
</dbReference>
<dbReference type="PANTHER" id="PTHR10344:SF4">
    <property type="entry name" value="UMP-CMP KINASE 2, MITOCHONDRIAL"/>
    <property type="match status" value="1"/>
</dbReference>
<dbReference type="Pfam" id="PF02223">
    <property type="entry name" value="Thymidylate_kin"/>
    <property type="match status" value="1"/>
</dbReference>
<dbReference type="SUPFAM" id="SSF52540">
    <property type="entry name" value="P-loop containing nucleoside triphosphate hydrolases"/>
    <property type="match status" value="1"/>
</dbReference>
<dbReference type="PROSITE" id="PS01331">
    <property type="entry name" value="THYMIDYLATE_KINASE"/>
    <property type="match status" value="1"/>
</dbReference>
<gene>
    <name evidence="1" type="primary">tmk</name>
    <name type="ordered locus">BcerKBAB4_0025</name>
</gene>
<evidence type="ECO:0000255" key="1">
    <source>
        <dbReference type="HAMAP-Rule" id="MF_00165"/>
    </source>
</evidence>
<sequence>MKGLFVTIEGPEGSGKTTLIKSLLPYFEQKEQKVMATREPGGIAISEDIRTILHKQEYTMMEARTEALLYAAARRQHLVEKVMPALEENYLVLCDRFIDSSLAYQGYARGLGMDKVFEINRFATEDCMPSLTIYLDIEPEVGLARIGKDAGREVNRLDMEDISFHKRVREGYLQVVERFSNRIVLVNADQPMKKLIEEVVQIIEDKLL</sequence>
<feature type="chain" id="PRO_1000097375" description="Thymidylate kinase">
    <location>
        <begin position="1"/>
        <end position="208"/>
    </location>
</feature>
<feature type="binding site" evidence="1">
    <location>
        <begin position="10"/>
        <end position="17"/>
    </location>
    <ligand>
        <name>ATP</name>
        <dbReference type="ChEBI" id="CHEBI:30616"/>
    </ligand>
</feature>
<accession>A9VN43</accession>
<reference key="1">
    <citation type="journal article" date="2008" name="Chem. Biol. Interact.">
        <title>Extending the Bacillus cereus group genomics to putative food-borne pathogens of different toxicity.</title>
        <authorList>
            <person name="Lapidus A."/>
            <person name="Goltsman E."/>
            <person name="Auger S."/>
            <person name="Galleron N."/>
            <person name="Segurens B."/>
            <person name="Dossat C."/>
            <person name="Land M.L."/>
            <person name="Broussolle V."/>
            <person name="Brillard J."/>
            <person name="Guinebretiere M.-H."/>
            <person name="Sanchis V."/>
            <person name="Nguen-the C."/>
            <person name="Lereclus D."/>
            <person name="Richardson P."/>
            <person name="Wincker P."/>
            <person name="Weissenbach J."/>
            <person name="Ehrlich S.D."/>
            <person name="Sorokin A."/>
        </authorList>
    </citation>
    <scope>NUCLEOTIDE SEQUENCE [LARGE SCALE GENOMIC DNA]</scope>
    <source>
        <strain>KBAB4</strain>
    </source>
</reference>
<comment type="function">
    <text evidence="1">Phosphorylation of dTMP to form dTDP in both de novo and salvage pathways of dTTP synthesis.</text>
</comment>
<comment type="catalytic activity">
    <reaction evidence="1">
        <text>dTMP + ATP = dTDP + ADP</text>
        <dbReference type="Rhea" id="RHEA:13517"/>
        <dbReference type="ChEBI" id="CHEBI:30616"/>
        <dbReference type="ChEBI" id="CHEBI:58369"/>
        <dbReference type="ChEBI" id="CHEBI:63528"/>
        <dbReference type="ChEBI" id="CHEBI:456216"/>
        <dbReference type="EC" id="2.7.4.9"/>
    </reaction>
</comment>
<comment type="similarity">
    <text evidence="1">Belongs to the thymidylate kinase family.</text>
</comment>
<keyword id="KW-0067">ATP-binding</keyword>
<keyword id="KW-0418">Kinase</keyword>
<keyword id="KW-0545">Nucleotide biosynthesis</keyword>
<keyword id="KW-0547">Nucleotide-binding</keyword>
<keyword id="KW-0808">Transferase</keyword>
<proteinExistence type="inferred from homology"/>